<organism>
    <name type="scientific">Geobacillus kaustophilus (strain HTA426)</name>
    <dbReference type="NCBI Taxonomy" id="235909"/>
    <lineage>
        <taxon>Bacteria</taxon>
        <taxon>Bacillati</taxon>
        <taxon>Bacillota</taxon>
        <taxon>Bacilli</taxon>
        <taxon>Bacillales</taxon>
        <taxon>Anoxybacillaceae</taxon>
        <taxon>Geobacillus</taxon>
        <taxon>Geobacillus thermoleovorans group</taxon>
    </lineage>
</organism>
<protein>
    <recommendedName>
        <fullName evidence="1">Trigger factor</fullName>
        <shortName evidence="1">TF</shortName>
        <ecNumber evidence="1">5.2.1.8</ecNumber>
    </recommendedName>
    <alternativeName>
        <fullName evidence="1">PPIase</fullName>
    </alternativeName>
</protein>
<dbReference type="EC" id="5.2.1.8" evidence="1"/>
<dbReference type="EMBL" id="BA000043">
    <property type="protein sequence ID" value="BAD76938.1"/>
    <property type="molecule type" value="Genomic_DNA"/>
</dbReference>
<dbReference type="RefSeq" id="WP_011232129.1">
    <property type="nucleotide sequence ID" value="NC_006510.1"/>
</dbReference>
<dbReference type="SMR" id="Q5KWJ8"/>
<dbReference type="STRING" id="235909.GK2653"/>
<dbReference type="KEGG" id="gka:GK2653"/>
<dbReference type="PATRIC" id="fig|235909.7.peg.2834"/>
<dbReference type="eggNOG" id="COG0544">
    <property type="taxonomic scope" value="Bacteria"/>
</dbReference>
<dbReference type="HOGENOM" id="CLU_033058_3_2_9"/>
<dbReference type="Proteomes" id="UP000001172">
    <property type="component" value="Chromosome"/>
</dbReference>
<dbReference type="GO" id="GO:0005737">
    <property type="term" value="C:cytoplasm"/>
    <property type="evidence" value="ECO:0007669"/>
    <property type="project" value="UniProtKB-SubCell"/>
</dbReference>
<dbReference type="GO" id="GO:0003755">
    <property type="term" value="F:peptidyl-prolyl cis-trans isomerase activity"/>
    <property type="evidence" value="ECO:0007669"/>
    <property type="project" value="UniProtKB-UniRule"/>
</dbReference>
<dbReference type="GO" id="GO:0044183">
    <property type="term" value="F:protein folding chaperone"/>
    <property type="evidence" value="ECO:0007669"/>
    <property type="project" value="TreeGrafter"/>
</dbReference>
<dbReference type="GO" id="GO:0043022">
    <property type="term" value="F:ribosome binding"/>
    <property type="evidence" value="ECO:0007669"/>
    <property type="project" value="TreeGrafter"/>
</dbReference>
<dbReference type="GO" id="GO:0051083">
    <property type="term" value="P:'de novo' cotranslational protein folding"/>
    <property type="evidence" value="ECO:0007669"/>
    <property type="project" value="TreeGrafter"/>
</dbReference>
<dbReference type="GO" id="GO:0051301">
    <property type="term" value="P:cell division"/>
    <property type="evidence" value="ECO:0007669"/>
    <property type="project" value="UniProtKB-KW"/>
</dbReference>
<dbReference type="GO" id="GO:0061077">
    <property type="term" value="P:chaperone-mediated protein folding"/>
    <property type="evidence" value="ECO:0007669"/>
    <property type="project" value="TreeGrafter"/>
</dbReference>
<dbReference type="GO" id="GO:0015031">
    <property type="term" value="P:protein transport"/>
    <property type="evidence" value="ECO:0007669"/>
    <property type="project" value="UniProtKB-UniRule"/>
</dbReference>
<dbReference type="GO" id="GO:0043335">
    <property type="term" value="P:protein unfolding"/>
    <property type="evidence" value="ECO:0007669"/>
    <property type="project" value="TreeGrafter"/>
</dbReference>
<dbReference type="FunFam" id="3.10.50.40:FF:000001">
    <property type="entry name" value="Trigger factor"/>
    <property type="match status" value="1"/>
</dbReference>
<dbReference type="Gene3D" id="3.10.50.40">
    <property type="match status" value="1"/>
</dbReference>
<dbReference type="Gene3D" id="3.30.70.1050">
    <property type="entry name" value="Trigger factor ribosome-binding domain"/>
    <property type="match status" value="1"/>
</dbReference>
<dbReference type="Gene3D" id="1.10.3120.10">
    <property type="entry name" value="Trigger factor, C-terminal domain"/>
    <property type="match status" value="1"/>
</dbReference>
<dbReference type="HAMAP" id="MF_00303">
    <property type="entry name" value="Trigger_factor_Tig"/>
    <property type="match status" value="1"/>
</dbReference>
<dbReference type="InterPro" id="IPR046357">
    <property type="entry name" value="PPIase_dom_sf"/>
</dbReference>
<dbReference type="InterPro" id="IPR001179">
    <property type="entry name" value="PPIase_FKBP_dom"/>
</dbReference>
<dbReference type="InterPro" id="IPR005215">
    <property type="entry name" value="Trig_fac"/>
</dbReference>
<dbReference type="InterPro" id="IPR008880">
    <property type="entry name" value="Trigger_fac_C"/>
</dbReference>
<dbReference type="InterPro" id="IPR037041">
    <property type="entry name" value="Trigger_fac_C_sf"/>
</dbReference>
<dbReference type="InterPro" id="IPR008881">
    <property type="entry name" value="Trigger_fac_ribosome-bd_bac"/>
</dbReference>
<dbReference type="InterPro" id="IPR036611">
    <property type="entry name" value="Trigger_fac_ribosome-bd_sf"/>
</dbReference>
<dbReference type="InterPro" id="IPR027304">
    <property type="entry name" value="Trigger_fact/SurA_dom_sf"/>
</dbReference>
<dbReference type="NCBIfam" id="TIGR00115">
    <property type="entry name" value="tig"/>
    <property type="match status" value="1"/>
</dbReference>
<dbReference type="PANTHER" id="PTHR30560">
    <property type="entry name" value="TRIGGER FACTOR CHAPERONE AND PEPTIDYL-PROLYL CIS/TRANS ISOMERASE"/>
    <property type="match status" value="1"/>
</dbReference>
<dbReference type="PANTHER" id="PTHR30560:SF3">
    <property type="entry name" value="TRIGGER FACTOR-LIKE PROTEIN TIG, CHLOROPLASTIC"/>
    <property type="match status" value="1"/>
</dbReference>
<dbReference type="Pfam" id="PF00254">
    <property type="entry name" value="FKBP_C"/>
    <property type="match status" value="1"/>
</dbReference>
<dbReference type="Pfam" id="PF05698">
    <property type="entry name" value="Trigger_C"/>
    <property type="match status" value="1"/>
</dbReference>
<dbReference type="Pfam" id="PF05697">
    <property type="entry name" value="Trigger_N"/>
    <property type="match status" value="1"/>
</dbReference>
<dbReference type="PIRSF" id="PIRSF003095">
    <property type="entry name" value="Trigger_factor"/>
    <property type="match status" value="1"/>
</dbReference>
<dbReference type="SUPFAM" id="SSF54534">
    <property type="entry name" value="FKBP-like"/>
    <property type="match status" value="1"/>
</dbReference>
<dbReference type="SUPFAM" id="SSF109998">
    <property type="entry name" value="Triger factor/SurA peptide-binding domain-like"/>
    <property type="match status" value="1"/>
</dbReference>
<dbReference type="SUPFAM" id="SSF102735">
    <property type="entry name" value="Trigger factor ribosome-binding domain"/>
    <property type="match status" value="1"/>
</dbReference>
<dbReference type="PROSITE" id="PS50059">
    <property type="entry name" value="FKBP_PPIASE"/>
    <property type="match status" value="1"/>
</dbReference>
<sequence length="428" mass="48140">MSVKWEKLEGNEGVLTVEVDAEKVNKGLDAAFKKVVKNITLPGFRKGKVPRVLFEKRFGVEALYQDALDILLPEAYAKAVEEAGIEPVSMPEIDIEQMEKGKSLIFKAKVTVKPEVKLGQYKGLEVEKMDTTVTDEDVENELKRLQEDYAELVVKEDGTVENGDTVVIDFEGFVDGEPFEGGKAENYSLEIGSGTFIPGFEEQLVGMKAGEEKEIQVTFPDEYHAKQLAGKPATFKVKVHEVKAKQLPALDDEFAKDVDEEVETLDELKAKIRARLEEAKKNEAETALRNAVVEKAAANAEMDIPEVMIKNETDRMLREFDQRLQMQGLNLQLYYQFSGQDEASLREQMKEDAEKRVRAALTLEAIAKAENIEVTDEEVNKELEKMAEAYKLSVDKLKELLGSLDGVKEDLKWRKTVDFLVEHSKVAA</sequence>
<gene>
    <name evidence="1" type="primary">tig</name>
    <name type="ordered locus">GK2653</name>
</gene>
<evidence type="ECO:0000255" key="1">
    <source>
        <dbReference type="HAMAP-Rule" id="MF_00303"/>
    </source>
</evidence>
<feature type="chain" id="PRO_0000179356" description="Trigger factor">
    <location>
        <begin position="1"/>
        <end position="428"/>
    </location>
</feature>
<feature type="domain" description="PPIase FKBP-type" evidence="1">
    <location>
        <begin position="163"/>
        <end position="248"/>
    </location>
</feature>
<comment type="function">
    <text evidence="1">Involved in protein export. Acts as a chaperone by maintaining the newly synthesized protein in an open conformation. Functions as a peptidyl-prolyl cis-trans isomerase.</text>
</comment>
<comment type="catalytic activity">
    <reaction evidence="1">
        <text>[protein]-peptidylproline (omega=180) = [protein]-peptidylproline (omega=0)</text>
        <dbReference type="Rhea" id="RHEA:16237"/>
        <dbReference type="Rhea" id="RHEA-COMP:10747"/>
        <dbReference type="Rhea" id="RHEA-COMP:10748"/>
        <dbReference type="ChEBI" id="CHEBI:83833"/>
        <dbReference type="ChEBI" id="CHEBI:83834"/>
        <dbReference type="EC" id="5.2.1.8"/>
    </reaction>
</comment>
<comment type="subcellular location">
    <subcellularLocation>
        <location>Cytoplasm</location>
    </subcellularLocation>
    <text evidence="1">About half TF is bound to the ribosome near the polypeptide exit tunnel while the other half is free in the cytoplasm.</text>
</comment>
<comment type="domain">
    <text evidence="1">Consists of 3 domains; the N-terminus binds the ribosome, the middle domain has PPIase activity, while the C-terminus has intrinsic chaperone activity on its own.</text>
</comment>
<comment type="similarity">
    <text evidence="1">Belongs to the FKBP-type PPIase family. Tig subfamily.</text>
</comment>
<proteinExistence type="inferred from homology"/>
<reference key="1">
    <citation type="journal article" date="2004" name="Nucleic Acids Res.">
        <title>Thermoadaptation trait revealed by the genome sequence of thermophilic Geobacillus kaustophilus.</title>
        <authorList>
            <person name="Takami H."/>
            <person name="Takaki Y."/>
            <person name="Chee G.-J."/>
            <person name="Nishi S."/>
            <person name="Shimamura S."/>
            <person name="Suzuki H."/>
            <person name="Matsui S."/>
            <person name="Uchiyama I."/>
        </authorList>
    </citation>
    <scope>NUCLEOTIDE SEQUENCE [LARGE SCALE GENOMIC DNA]</scope>
    <source>
        <strain>HTA426</strain>
    </source>
</reference>
<name>TIG_GEOKA</name>
<keyword id="KW-0131">Cell cycle</keyword>
<keyword id="KW-0132">Cell division</keyword>
<keyword id="KW-0143">Chaperone</keyword>
<keyword id="KW-0963">Cytoplasm</keyword>
<keyword id="KW-0413">Isomerase</keyword>
<keyword id="KW-1185">Reference proteome</keyword>
<keyword id="KW-0697">Rotamase</keyword>
<accession>Q5KWJ8</accession>